<evidence type="ECO:0000250" key="1"/>
<evidence type="ECO:0000255" key="2"/>
<evidence type="ECO:0000255" key="3">
    <source>
        <dbReference type="PROSITE-ProRule" id="PRU00114"/>
    </source>
</evidence>
<evidence type="ECO:0000255" key="4">
    <source>
        <dbReference type="PROSITE-ProRule" id="PRU00204"/>
    </source>
</evidence>
<evidence type="ECO:0000269" key="5">
    <source>
    </source>
</evidence>
<evidence type="ECO:0000305" key="6"/>
<dbReference type="EC" id="3.2.2.6" evidence="4"/>
<dbReference type="EMBL" id="AB449368">
    <property type="protein sequence ID" value="BAG85347.1"/>
    <property type="molecule type" value="mRNA"/>
</dbReference>
<dbReference type="RefSeq" id="NP_001136054.1">
    <property type="nucleotide sequence ID" value="NM_001142582.1"/>
</dbReference>
<dbReference type="SMR" id="B6ZK77"/>
<dbReference type="FunCoup" id="B6ZK77">
    <property type="interactions" value="892"/>
</dbReference>
<dbReference type="STRING" id="7955.ENSDARP00000131777"/>
<dbReference type="GlyCosmos" id="B6ZK77">
    <property type="glycosylation" value="6 sites, No reported glycans"/>
</dbReference>
<dbReference type="PaxDb" id="7955-ENSDARP00000099490"/>
<dbReference type="GeneID" id="557801"/>
<dbReference type="KEGG" id="dre:557801"/>
<dbReference type="AGR" id="ZFIN:ZDB-GENE-090109-2"/>
<dbReference type="CTD" id="557801"/>
<dbReference type="ZFIN" id="ZDB-GENE-090109-2">
    <property type="gene designation" value="il1rapl1b"/>
</dbReference>
<dbReference type="eggNOG" id="KOG3971">
    <property type="taxonomic scope" value="Eukaryota"/>
</dbReference>
<dbReference type="InParanoid" id="B6ZK77"/>
<dbReference type="OrthoDB" id="9925886at2759"/>
<dbReference type="PhylomeDB" id="B6ZK77"/>
<dbReference type="Reactome" id="R-DRE-9007892">
    <property type="pathway name" value="Interleukin-38 signaling"/>
</dbReference>
<dbReference type="PRO" id="PR:B6ZK77"/>
<dbReference type="Proteomes" id="UP000000437">
    <property type="component" value="Chromosome 11"/>
</dbReference>
<dbReference type="GO" id="GO:0043679">
    <property type="term" value="C:axon terminus"/>
    <property type="evidence" value="ECO:0000314"/>
    <property type="project" value="ZFIN"/>
</dbReference>
<dbReference type="GO" id="GO:0009986">
    <property type="term" value="C:cell surface"/>
    <property type="evidence" value="ECO:0000318"/>
    <property type="project" value="GO_Central"/>
</dbReference>
<dbReference type="GO" id="GO:0005737">
    <property type="term" value="C:cytoplasm"/>
    <property type="evidence" value="ECO:0007669"/>
    <property type="project" value="UniProtKB-SubCell"/>
</dbReference>
<dbReference type="GO" id="GO:0043025">
    <property type="term" value="C:neuronal cell body"/>
    <property type="evidence" value="ECO:0000314"/>
    <property type="project" value="ZFIN"/>
</dbReference>
<dbReference type="GO" id="GO:0005886">
    <property type="term" value="C:plasma membrane"/>
    <property type="evidence" value="ECO:0000318"/>
    <property type="project" value="GO_Central"/>
</dbReference>
<dbReference type="GO" id="GO:0061809">
    <property type="term" value="F:NAD+ nucleosidase activity, cyclic ADP-ribose generating"/>
    <property type="evidence" value="ECO:0007669"/>
    <property type="project" value="UniProtKB-EC"/>
</dbReference>
<dbReference type="GO" id="GO:0007166">
    <property type="term" value="P:cell surface receptor signaling pathway"/>
    <property type="evidence" value="ECO:0000318"/>
    <property type="project" value="GO_Central"/>
</dbReference>
<dbReference type="GO" id="GO:0045920">
    <property type="term" value="P:negative regulation of exocytosis"/>
    <property type="evidence" value="ECO:0000318"/>
    <property type="project" value="GO_Central"/>
</dbReference>
<dbReference type="GO" id="GO:0016322">
    <property type="term" value="P:neuron remodeling"/>
    <property type="evidence" value="ECO:0000315"/>
    <property type="project" value="ZFIN"/>
</dbReference>
<dbReference type="GO" id="GO:0050808">
    <property type="term" value="P:synapse organization"/>
    <property type="evidence" value="ECO:0000315"/>
    <property type="project" value="ZFIN"/>
</dbReference>
<dbReference type="FunFam" id="2.60.40.10:FF:000188">
    <property type="entry name" value="Interleukin-1 receptor accessory protein-like 1"/>
    <property type="match status" value="1"/>
</dbReference>
<dbReference type="FunFam" id="2.60.40.10:FF:000284">
    <property type="entry name" value="interleukin-1 receptor accessory protein-like 1"/>
    <property type="match status" value="1"/>
</dbReference>
<dbReference type="FunFam" id="2.60.40.10:FF:000220">
    <property type="entry name" value="X-linked interleukin-1 receptor accessory protein-like 1"/>
    <property type="match status" value="1"/>
</dbReference>
<dbReference type="FunFam" id="3.40.50.10140:FF:000004">
    <property type="entry name" value="X-linked interleukin-1 receptor accessory protein-like 1"/>
    <property type="match status" value="1"/>
</dbReference>
<dbReference type="Gene3D" id="2.60.40.10">
    <property type="entry name" value="Immunoglobulins"/>
    <property type="match status" value="3"/>
</dbReference>
<dbReference type="Gene3D" id="3.40.50.10140">
    <property type="entry name" value="Toll/interleukin-1 receptor homology (TIR) domain"/>
    <property type="match status" value="1"/>
</dbReference>
<dbReference type="InterPro" id="IPR007110">
    <property type="entry name" value="Ig-like_dom"/>
</dbReference>
<dbReference type="InterPro" id="IPR036179">
    <property type="entry name" value="Ig-like_dom_sf"/>
</dbReference>
<dbReference type="InterPro" id="IPR013783">
    <property type="entry name" value="Ig-like_fold"/>
</dbReference>
<dbReference type="InterPro" id="IPR003599">
    <property type="entry name" value="Ig_sub"/>
</dbReference>
<dbReference type="InterPro" id="IPR003598">
    <property type="entry name" value="Ig_sub2"/>
</dbReference>
<dbReference type="InterPro" id="IPR015621">
    <property type="entry name" value="IL-1_rcpt_fam"/>
</dbReference>
<dbReference type="InterPro" id="IPR041416">
    <property type="entry name" value="IL-1RAcP-like_ig"/>
</dbReference>
<dbReference type="InterPro" id="IPR000157">
    <property type="entry name" value="TIR_dom"/>
</dbReference>
<dbReference type="InterPro" id="IPR035897">
    <property type="entry name" value="Toll_tir_struct_dom_sf"/>
</dbReference>
<dbReference type="PANTHER" id="PTHR11890:SF22">
    <property type="entry name" value="INTERLEUKIN-1 RECEPTOR ACCESSORY PROTEIN-LIKE 1"/>
    <property type="match status" value="1"/>
</dbReference>
<dbReference type="PANTHER" id="PTHR11890">
    <property type="entry name" value="INTERLEUKIN-1 RECEPTOR FAMILY MEMBER"/>
    <property type="match status" value="1"/>
</dbReference>
<dbReference type="Pfam" id="PF13927">
    <property type="entry name" value="Ig_3"/>
    <property type="match status" value="1"/>
</dbReference>
<dbReference type="Pfam" id="PF18452">
    <property type="entry name" value="Ig_6"/>
    <property type="match status" value="1"/>
</dbReference>
<dbReference type="Pfam" id="PF01582">
    <property type="entry name" value="TIR"/>
    <property type="match status" value="1"/>
</dbReference>
<dbReference type="PRINTS" id="PR01537">
    <property type="entry name" value="INTRLKN1R1F"/>
</dbReference>
<dbReference type="SMART" id="SM00409">
    <property type="entry name" value="IG"/>
    <property type="match status" value="3"/>
</dbReference>
<dbReference type="SMART" id="SM00408">
    <property type="entry name" value="IGc2"/>
    <property type="match status" value="2"/>
</dbReference>
<dbReference type="SMART" id="SM00255">
    <property type="entry name" value="TIR"/>
    <property type="match status" value="1"/>
</dbReference>
<dbReference type="SUPFAM" id="SSF48726">
    <property type="entry name" value="Immunoglobulin"/>
    <property type="match status" value="3"/>
</dbReference>
<dbReference type="SUPFAM" id="SSF52200">
    <property type="entry name" value="Toll/Interleukin receptor TIR domain"/>
    <property type="match status" value="1"/>
</dbReference>
<dbReference type="PROSITE" id="PS50835">
    <property type="entry name" value="IG_LIKE"/>
    <property type="match status" value="3"/>
</dbReference>
<dbReference type="PROSITE" id="PS50104">
    <property type="entry name" value="TIR"/>
    <property type="match status" value="1"/>
</dbReference>
<name>IRL1B_DANRE</name>
<sequence>MRSRVPLQILLYAAVIRSLKVVSKRGSVDGCTDWSVDYLRYRVLLGEPVRIKCALFYGYIRANYTHAQSAGLSLMWYRSATHTDHEEPITLDGTRTLKEEDALWFRPAQLQDSGHYSCVLRNSSYCMKVSMALTVAENSSGLCYNSKMRRLEKAELSKSKDILCPDIQDYTPAGSEPHVTWYKECRPKQWRSSIIRTADLLSIRDVREDDIGNYTCEIQFGRFLVRRTTELTVTAPLTDKPPKILQPPEHKLSVMELQLGGPVNLTCRAFFGYSGDVSPLIYWMKGEKFIEDLDETRIRESEIKMVREHLGEQEVSVSLTIDSLQEEDLGNYSCYVENGHGRRHAIIQLSRRELMYTVELAGGLGAILLMLIFLVSLYKCYRIELMLFYRNHFGSEDVDGENKDYDAYVSYTKVDPDQWSQETREEEHFALEILPDMLEKHYGYKLFIPDRDLIPTGTYIEDVARCVDQSKRLIIVMTPNYVVRRGWSIFELETRLRNMLVSGEIKVILIECSDLRGIMNYQEVEALKHTIKLLTVIRWPGPGSSKPNSRFWKQLQYEMPFRRPEPKLSHEQVLDASEQGPFGELQTVSALSMVSATSTAMATAHPDLRSGFHNTYNTQLRQKHYYRGYEYDIPSSGTLPPLATMGSQHTYCNIPMSLLNGQRPPGQPAHGQQQSLEEQQVNNALLPLLPRETSISSVIW</sequence>
<proteinExistence type="evidence at protein level"/>
<comment type="function">
    <text evidence="5">May regulate secretion and presynaptic differentiation through inhibition of the activity of N-type voltage-gated calcium channel. During presynaptic differentiation may regulate both synaptic vesicle accumulation in axon terminals and subsequent axon terminal remodeling.</text>
</comment>
<comment type="catalytic activity">
    <reaction evidence="4">
        <text>NAD(+) + H2O = ADP-D-ribose + nicotinamide + H(+)</text>
        <dbReference type="Rhea" id="RHEA:16301"/>
        <dbReference type="ChEBI" id="CHEBI:15377"/>
        <dbReference type="ChEBI" id="CHEBI:15378"/>
        <dbReference type="ChEBI" id="CHEBI:17154"/>
        <dbReference type="ChEBI" id="CHEBI:57540"/>
        <dbReference type="ChEBI" id="CHEBI:57967"/>
        <dbReference type="EC" id="3.2.2.6"/>
    </reaction>
    <physiologicalReaction direction="left-to-right" evidence="4">
        <dbReference type="Rhea" id="RHEA:16302"/>
    </physiologicalReaction>
</comment>
<comment type="subcellular location">
    <subcellularLocation>
        <location evidence="1">Cell membrane</location>
        <topology evidence="1">Single-pass type I membrane protein</topology>
    </subcellularLocation>
    <subcellularLocation>
        <location evidence="1">Cytoplasm</location>
    </subcellularLocation>
    <text evidence="5">May localize to the cell body and growth cones of dendrite-like processes.</text>
</comment>
<comment type="developmental stage">
    <text evidence="5">Detectable at 24 hpf and gradually increases through development. Detected in the nervous system in olfactory placode, olfactory bulb, telencephalon and tectum.</text>
</comment>
<comment type="domain">
    <text evidence="4">The TIR domain mediates NAD(+) hydrolase (NADase) activity. Self-association of TIR domains is required for NADase activity.</text>
</comment>
<comment type="similarity">
    <text evidence="6">Belongs to the interleukin-1 receptor family.</text>
</comment>
<gene>
    <name type="primary">il1rapl1b</name>
</gene>
<organism>
    <name type="scientific">Danio rerio</name>
    <name type="common">Zebrafish</name>
    <name type="synonym">Brachydanio rerio</name>
    <dbReference type="NCBI Taxonomy" id="7955"/>
    <lineage>
        <taxon>Eukaryota</taxon>
        <taxon>Metazoa</taxon>
        <taxon>Chordata</taxon>
        <taxon>Craniata</taxon>
        <taxon>Vertebrata</taxon>
        <taxon>Euteleostomi</taxon>
        <taxon>Actinopterygii</taxon>
        <taxon>Neopterygii</taxon>
        <taxon>Teleostei</taxon>
        <taxon>Ostariophysi</taxon>
        <taxon>Cypriniformes</taxon>
        <taxon>Danionidae</taxon>
        <taxon>Danioninae</taxon>
        <taxon>Danio</taxon>
    </lineage>
</organism>
<feature type="signal peptide" evidence="2">
    <location>
        <begin position="1"/>
        <end position="18"/>
    </location>
</feature>
<feature type="chain" id="PRO_0000390563" description="Interleukin-1 receptor accessory protein-like 1-B">
    <location>
        <begin position="19"/>
        <end position="700"/>
    </location>
</feature>
<feature type="topological domain" description="Extracellular" evidence="2">
    <location>
        <begin position="19"/>
        <end position="357"/>
    </location>
</feature>
<feature type="transmembrane region" description="Helical" evidence="2">
    <location>
        <begin position="358"/>
        <end position="378"/>
    </location>
</feature>
<feature type="topological domain" description="Cytoplasmic" evidence="2">
    <location>
        <begin position="379"/>
        <end position="700"/>
    </location>
</feature>
<feature type="domain" description="Ig-like C2-type 1">
    <location>
        <begin position="32"/>
        <end position="134"/>
    </location>
</feature>
<feature type="domain" description="Ig-like C2-type 2">
    <location>
        <begin position="143"/>
        <end position="232"/>
    </location>
</feature>
<feature type="domain" description="Ig-like C2-type 3">
    <location>
        <begin position="242"/>
        <end position="350"/>
    </location>
</feature>
<feature type="domain" description="TIR" evidence="4">
    <location>
        <begin position="403"/>
        <end position="559"/>
    </location>
</feature>
<feature type="region of interest" description="Required for synaptic vesicle accumulation during synaptogenesis">
    <location>
        <begin position="564"/>
        <end position="700"/>
    </location>
</feature>
<feature type="active site" evidence="4">
    <location>
        <position position="491"/>
    </location>
</feature>
<feature type="glycosylation site" description="N-linked (GlcNAc...) asparagine" evidence="2">
    <location>
        <position position="63"/>
    </location>
</feature>
<feature type="glycosylation site" description="N-linked (GlcNAc...) asparagine" evidence="2">
    <location>
        <position position="122"/>
    </location>
</feature>
<feature type="glycosylation site" description="N-linked (GlcNAc...) asparagine" evidence="2">
    <location>
        <position position="138"/>
    </location>
</feature>
<feature type="glycosylation site" description="N-linked (GlcNAc...) asparagine" evidence="2">
    <location>
        <position position="213"/>
    </location>
</feature>
<feature type="glycosylation site" description="N-linked (GlcNAc...) asparagine" evidence="2">
    <location>
        <position position="264"/>
    </location>
</feature>
<feature type="glycosylation site" description="N-linked (GlcNAc...) asparagine" evidence="2">
    <location>
        <position position="331"/>
    </location>
</feature>
<feature type="disulfide bond" evidence="3">
    <location>
        <begin position="53"/>
        <end position="118"/>
    </location>
</feature>
<feature type="disulfide bond" evidence="3">
    <location>
        <begin position="164"/>
        <end position="216"/>
    </location>
</feature>
<feature type="disulfide bond" evidence="3">
    <location>
        <begin position="267"/>
        <end position="334"/>
    </location>
</feature>
<feature type="mutagenesis site" description="Unable to induce axon terminal remodeling." evidence="5">
    <original>P</original>
    <variation>H</variation>
    <location>
        <position position="455"/>
    </location>
</feature>
<accession>B6ZK77</accession>
<reference key="1">
    <citation type="journal article" date="2008" name="Mol. Cell. Neurosci.">
        <title>Zebrafish orthologue of mental retardation protein IL1RAPL1 regulates presynaptic differentiation.</title>
        <authorList>
            <person name="Yoshida T."/>
            <person name="Mishina M."/>
        </authorList>
    </citation>
    <scope>NUCLEOTIDE SEQUENCE [MRNA]</scope>
    <scope>FUNCTION</scope>
    <scope>SUBCELLULAR LOCATION</scope>
    <scope>DEVELOPMENTAL STAGE</scope>
    <scope>MUTAGENESIS OF PRO-455</scope>
</reference>
<keyword id="KW-1003">Cell membrane</keyword>
<keyword id="KW-0963">Cytoplasm</keyword>
<keyword id="KW-1015">Disulfide bond</keyword>
<keyword id="KW-0325">Glycoprotein</keyword>
<keyword id="KW-0378">Hydrolase</keyword>
<keyword id="KW-0393">Immunoglobulin domain</keyword>
<keyword id="KW-0472">Membrane</keyword>
<keyword id="KW-0520">NAD</keyword>
<keyword id="KW-0675">Receptor</keyword>
<keyword id="KW-1185">Reference proteome</keyword>
<keyword id="KW-0677">Repeat</keyword>
<keyword id="KW-0732">Signal</keyword>
<keyword id="KW-0812">Transmembrane</keyword>
<keyword id="KW-1133">Transmembrane helix</keyword>
<protein>
    <recommendedName>
        <fullName>Interleukin-1 receptor accessory protein-like 1-B</fullName>
        <ecNumber evidence="4">3.2.2.6</ecNumber>
    </recommendedName>
</protein>